<comment type="function">
    <text evidence="1">ATP-dependent specificity component of the Clp protease. It directs the protease to specific substrates. Can perform chaperone functions in the absence of ClpP.</text>
</comment>
<comment type="subunit">
    <text evidence="1">Component of the ClpX-ClpP complex. Forms a hexameric ring that, in the presence of ATP, binds to fourteen ClpP subunits assembled into a disk-like structure with a central cavity, resembling the structure of eukaryotic proteasomes.</text>
</comment>
<comment type="similarity">
    <text evidence="1">Belongs to the ClpX chaperone family.</text>
</comment>
<protein>
    <recommendedName>
        <fullName evidence="1">ATP-dependent Clp protease ATP-binding subunit ClpX</fullName>
    </recommendedName>
</protein>
<reference key="1">
    <citation type="journal article" date="2007" name="Photosyn. Res.">
        <title>Complete nucleotide sequence of the freshwater unicellular cyanobacterium Synechococcus elongatus PCC 6301 chromosome: gene content and organization.</title>
        <authorList>
            <person name="Sugita C."/>
            <person name="Ogata K."/>
            <person name="Shikata M."/>
            <person name="Jikuya H."/>
            <person name="Takano J."/>
            <person name="Furumichi M."/>
            <person name="Kanehisa M."/>
            <person name="Omata T."/>
            <person name="Sugiura M."/>
            <person name="Sugita M."/>
        </authorList>
    </citation>
    <scope>NUCLEOTIDE SEQUENCE [LARGE SCALE GENOMIC DNA]</scope>
    <source>
        <strain>ATCC 27144 / PCC 6301 / SAUG 1402/1</strain>
    </source>
</reference>
<gene>
    <name evidence="1" type="primary">clpX</name>
    <name type="ordered locus">syc1583_c</name>
</gene>
<organism>
    <name type="scientific">Synechococcus sp. (strain ATCC 27144 / PCC 6301 / SAUG 1402/1)</name>
    <name type="common">Anacystis nidulans</name>
    <dbReference type="NCBI Taxonomy" id="269084"/>
    <lineage>
        <taxon>Bacteria</taxon>
        <taxon>Bacillati</taxon>
        <taxon>Cyanobacteriota</taxon>
        <taxon>Cyanophyceae</taxon>
        <taxon>Synechococcales</taxon>
        <taxon>Synechococcaceae</taxon>
        <taxon>Synechococcus</taxon>
    </lineage>
</organism>
<evidence type="ECO:0000255" key="1">
    <source>
        <dbReference type="HAMAP-Rule" id="MF_00175"/>
    </source>
</evidence>
<evidence type="ECO:0000255" key="2">
    <source>
        <dbReference type="PROSITE-ProRule" id="PRU01250"/>
    </source>
</evidence>
<evidence type="ECO:0000256" key="3">
    <source>
        <dbReference type="SAM" id="MobiDB-lite"/>
    </source>
</evidence>
<proteinExistence type="inferred from homology"/>
<dbReference type="EMBL" id="AP008231">
    <property type="protein sequence ID" value="BAD79773.1"/>
    <property type="molecule type" value="Genomic_DNA"/>
</dbReference>
<dbReference type="RefSeq" id="WP_011243893.1">
    <property type="nucleotide sequence ID" value="NC_006576.1"/>
</dbReference>
<dbReference type="SMR" id="Q5N1P7"/>
<dbReference type="KEGG" id="syc:syc1583_c"/>
<dbReference type="eggNOG" id="COG1219">
    <property type="taxonomic scope" value="Bacteria"/>
</dbReference>
<dbReference type="Proteomes" id="UP000001175">
    <property type="component" value="Chromosome"/>
</dbReference>
<dbReference type="GO" id="GO:0009376">
    <property type="term" value="C:HslUV protease complex"/>
    <property type="evidence" value="ECO:0007669"/>
    <property type="project" value="TreeGrafter"/>
</dbReference>
<dbReference type="GO" id="GO:0005524">
    <property type="term" value="F:ATP binding"/>
    <property type="evidence" value="ECO:0007669"/>
    <property type="project" value="UniProtKB-UniRule"/>
</dbReference>
<dbReference type="GO" id="GO:0016887">
    <property type="term" value="F:ATP hydrolysis activity"/>
    <property type="evidence" value="ECO:0007669"/>
    <property type="project" value="InterPro"/>
</dbReference>
<dbReference type="GO" id="GO:0140662">
    <property type="term" value="F:ATP-dependent protein folding chaperone"/>
    <property type="evidence" value="ECO:0007669"/>
    <property type="project" value="InterPro"/>
</dbReference>
<dbReference type="GO" id="GO:0046983">
    <property type="term" value="F:protein dimerization activity"/>
    <property type="evidence" value="ECO:0007669"/>
    <property type="project" value="InterPro"/>
</dbReference>
<dbReference type="GO" id="GO:0051082">
    <property type="term" value="F:unfolded protein binding"/>
    <property type="evidence" value="ECO:0007669"/>
    <property type="project" value="UniProtKB-UniRule"/>
</dbReference>
<dbReference type="GO" id="GO:0008270">
    <property type="term" value="F:zinc ion binding"/>
    <property type="evidence" value="ECO:0007669"/>
    <property type="project" value="InterPro"/>
</dbReference>
<dbReference type="GO" id="GO:0051301">
    <property type="term" value="P:cell division"/>
    <property type="evidence" value="ECO:0007669"/>
    <property type="project" value="TreeGrafter"/>
</dbReference>
<dbReference type="GO" id="GO:0051603">
    <property type="term" value="P:proteolysis involved in protein catabolic process"/>
    <property type="evidence" value="ECO:0007669"/>
    <property type="project" value="TreeGrafter"/>
</dbReference>
<dbReference type="CDD" id="cd19497">
    <property type="entry name" value="RecA-like_ClpX"/>
    <property type="match status" value="1"/>
</dbReference>
<dbReference type="FunFam" id="1.10.8.60:FF:000002">
    <property type="entry name" value="ATP-dependent Clp protease ATP-binding subunit ClpX"/>
    <property type="match status" value="1"/>
</dbReference>
<dbReference type="FunFam" id="3.40.50.300:FF:000005">
    <property type="entry name" value="ATP-dependent Clp protease ATP-binding subunit ClpX"/>
    <property type="match status" value="1"/>
</dbReference>
<dbReference type="Gene3D" id="1.10.8.60">
    <property type="match status" value="1"/>
</dbReference>
<dbReference type="Gene3D" id="6.20.220.10">
    <property type="entry name" value="ClpX chaperone, C4-type zinc finger domain"/>
    <property type="match status" value="1"/>
</dbReference>
<dbReference type="Gene3D" id="3.40.50.300">
    <property type="entry name" value="P-loop containing nucleotide triphosphate hydrolases"/>
    <property type="match status" value="1"/>
</dbReference>
<dbReference type="HAMAP" id="MF_00175">
    <property type="entry name" value="ClpX"/>
    <property type="match status" value="1"/>
</dbReference>
<dbReference type="InterPro" id="IPR003593">
    <property type="entry name" value="AAA+_ATPase"/>
</dbReference>
<dbReference type="InterPro" id="IPR050052">
    <property type="entry name" value="ATP-dep_Clp_protease_ClpX"/>
</dbReference>
<dbReference type="InterPro" id="IPR003959">
    <property type="entry name" value="ATPase_AAA_core"/>
</dbReference>
<dbReference type="InterPro" id="IPR019489">
    <property type="entry name" value="Clp_ATPase_C"/>
</dbReference>
<dbReference type="InterPro" id="IPR004487">
    <property type="entry name" value="Clp_protease_ATP-bd_su_ClpX"/>
</dbReference>
<dbReference type="InterPro" id="IPR046425">
    <property type="entry name" value="ClpX_bact"/>
</dbReference>
<dbReference type="InterPro" id="IPR027417">
    <property type="entry name" value="P-loop_NTPase"/>
</dbReference>
<dbReference type="InterPro" id="IPR010603">
    <property type="entry name" value="Znf_CppX_C4"/>
</dbReference>
<dbReference type="InterPro" id="IPR038366">
    <property type="entry name" value="Znf_CppX_C4_sf"/>
</dbReference>
<dbReference type="NCBIfam" id="TIGR00382">
    <property type="entry name" value="clpX"/>
    <property type="match status" value="1"/>
</dbReference>
<dbReference type="NCBIfam" id="NF003745">
    <property type="entry name" value="PRK05342.1"/>
    <property type="match status" value="1"/>
</dbReference>
<dbReference type="PANTHER" id="PTHR48102:SF7">
    <property type="entry name" value="ATP-DEPENDENT CLP PROTEASE ATP-BINDING SUBUNIT CLPX-LIKE, MITOCHONDRIAL"/>
    <property type="match status" value="1"/>
</dbReference>
<dbReference type="PANTHER" id="PTHR48102">
    <property type="entry name" value="ATP-DEPENDENT CLP PROTEASE ATP-BINDING SUBUNIT CLPX-LIKE, MITOCHONDRIAL-RELATED"/>
    <property type="match status" value="1"/>
</dbReference>
<dbReference type="Pfam" id="PF07724">
    <property type="entry name" value="AAA_2"/>
    <property type="match status" value="1"/>
</dbReference>
<dbReference type="Pfam" id="PF10431">
    <property type="entry name" value="ClpB_D2-small"/>
    <property type="match status" value="1"/>
</dbReference>
<dbReference type="Pfam" id="PF06689">
    <property type="entry name" value="zf-C4_ClpX"/>
    <property type="match status" value="1"/>
</dbReference>
<dbReference type="SMART" id="SM00382">
    <property type="entry name" value="AAA"/>
    <property type="match status" value="1"/>
</dbReference>
<dbReference type="SMART" id="SM01086">
    <property type="entry name" value="ClpB_D2-small"/>
    <property type="match status" value="1"/>
</dbReference>
<dbReference type="SMART" id="SM00994">
    <property type="entry name" value="zf-C4_ClpX"/>
    <property type="match status" value="1"/>
</dbReference>
<dbReference type="SUPFAM" id="SSF57716">
    <property type="entry name" value="Glucocorticoid receptor-like (DNA-binding domain)"/>
    <property type="match status" value="1"/>
</dbReference>
<dbReference type="SUPFAM" id="SSF52540">
    <property type="entry name" value="P-loop containing nucleoside triphosphate hydrolases"/>
    <property type="match status" value="1"/>
</dbReference>
<dbReference type="PROSITE" id="PS51902">
    <property type="entry name" value="CLPX_ZB"/>
    <property type="match status" value="1"/>
</dbReference>
<sequence>MSRYDSHLKCSFCGKSQEQVRKLIAGPGVYICDECVDLCNEILDEELFDGNANPAPPPGSPKPATAATTSHQGPRKPKRSLTLSQIPKPHDIKRYLDHHVIGQNEAKKMLSVAVYNHYKRLAYQQSAEEAGETIEIQKSNILLIGPTGCGKTLLAQTLAKLLDVPFAVADATTLTEAGYVGEDVENILLRLLQVADLDIEEAQRGIIYIDEIDKIARKSENPSITRDVSGEGVQQALLKMLEGTIANVPPQGGRKHPYQDCIQIDTRNILFICGGAFVGLEKLVDRRLGKKSIGFVHPEESKTKEQRAAAILRHMEPEDLVQFGLIPEFIGRMPVTAVLDPLDETALTEILTEPRDALVKQYQKLMHMDSVELEFRQDAIEAIAREAFRRKTGARALRGIVEEIMLEVMYELPSRQDVTHCTITREMVEKRSSADVLLLPSSLPTPESA</sequence>
<feature type="chain" id="PRO_0000160440" description="ATP-dependent Clp protease ATP-binding subunit ClpX">
    <location>
        <begin position="1"/>
        <end position="449"/>
    </location>
</feature>
<feature type="domain" description="ClpX-type ZB" evidence="2">
    <location>
        <begin position="1"/>
        <end position="51"/>
    </location>
</feature>
<feature type="region of interest" description="Disordered" evidence="3">
    <location>
        <begin position="49"/>
        <end position="82"/>
    </location>
</feature>
<feature type="binding site" evidence="2">
    <location>
        <position position="10"/>
    </location>
    <ligand>
        <name>Zn(2+)</name>
        <dbReference type="ChEBI" id="CHEBI:29105"/>
    </ligand>
</feature>
<feature type="binding site" evidence="2">
    <location>
        <position position="13"/>
    </location>
    <ligand>
        <name>Zn(2+)</name>
        <dbReference type="ChEBI" id="CHEBI:29105"/>
    </ligand>
</feature>
<feature type="binding site" evidence="2">
    <location>
        <position position="32"/>
    </location>
    <ligand>
        <name>Zn(2+)</name>
        <dbReference type="ChEBI" id="CHEBI:29105"/>
    </ligand>
</feature>
<feature type="binding site" evidence="2">
    <location>
        <position position="35"/>
    </location>
    <ligand>
        <name>Zn(2+)</name>
        <dbReference type="ChEBI" id="CHEBI:29105"/>
    </ligand>
</feature>
<feature type="binding site" evidence="1">
    <location>
        <begin position="146"/>
        <end position="153"/>
    </location>
    <ligand>
        <name>ATP</name>
        <dbReference type="ChEBI" id="CHEBI:30616"/>
    </ligand>
</feature>
<accession>Q5N1P7</accession>
<name>CLPX_SYNP6</name>
<keyword id="KW-0067">ATP-binding</keyword>
<keyword id="KW-0143">Chaperone</keyword>
<keyword id="KW-0479">Metal-binding</keyword>
<keyword id="KW-0547">Nucleotide-binding</keyword>
<keyword id="KW-0862">Zinc</keyword>